<feature type="chain" id="PRO_0000190856" description="Probable endonuclease 4">
    <location>
        <begin position="1"/>
        <end position="289"/>
    </location>
</feature>
<feature type="binding site" evidence="1">
    <location>
        <position position="74"/>
    </location>
    <ligand>
        <name>Zn(2+)</name>
        <dbReference type="ChEBI" id="CHEBI:29105"/>
        <label>1</label>
    </ligand>
</feature>
<feature type="binding site" evidence="1">
    <location>
        <position position="115"/>
    </location>
    <ligand>
        <name>Zn(2+)</name>
        <dbReference type="ChEBI" id="CHEBI:29105"/>
        <label>1</label>
    </ligand>
</feature>
<feature type="binding site" evidence="1">
    <location>
        <position position="150"/>
    </location>
    <ligand>
        <name>Zn(2+)</name>
        <dbReference type="ChEBI" id="CHEBI:29105"/>
        <label>1</label>
    </ligand>
</feature>
<feature type="binding site" evidence="1">
    <location>
        <position position="150"/>
    </location>
    <ligand>
        <name>Zn(2+)</name>
        <dbReference type="ChEBI" id="CHEBI:29105"/>
        <label>2</label>
    </ligand>
</feature>
<feature type="binding site" evidence="1">
    <location>
        <position position="184"/>
    </location>
    <ligand>
        <name>Zn(2+)</name>
        <dbReference type="ChEBI" id="CHEBI:29105"/>
        <label>2</label>
    </ligand>
</feature>
<feature type="binding site" evidence="1">
    <location>
        <position position="187"/>
    </location>
    <ligand>
        <name>Zn(2+)</name>
        <dbReference type="ChEBI" id="CHEBI:29105"/>
        <label>3</label>
    </ligand>
</feature>
<feature type="binding site" evidence="1">
    <location>
        <position position="218"/>
    </location>
    <ligand>
        <name>Zn(2+)</name>
        <dbReference type="ChEBI" id="CHEBI:29105"/>
        <label>2</label>
    </ligand>
</feature>
<feature type="binding site" evidence="1">
    <location>
        <position position="231"/>
    </location>
    <ligand>
        <name>Zn(2+)</name>
        <dbReference type="ChEBI" id="CHEBI:29105"/>
        <label>3</label>
    </ligand>
</feature>
<feature type="binding site" evidence="1">
    <location>
        <position position="233"/>
    </location>
    <ligand>
        <name>Zn(2+)</name>
        <dbReference type="ChEBI" id="CHEBI:29105"/>
        <label>3</label>
    </ligand>
</feature>
<feature type="binding site" evidence="1">
    <location>
        <position position="263"/>
    </location>
    <ligand>
        <name>Zn(2+)</name>
        <dbReference type="ChEBI" id="CHEBI:29105"/>
        <label>2</label>
    </ligand>
</feature>
<comment type="function">
    <text evidence="1">Endonuclease IV plays a role in DNA repair. It cleaves phosphodiester bonds at apurinic or apyrimidinic (AP) sites, generating a 3'-hydroxyl group and a 5'-terminal sugar phosphate.</text>
</comment>
<comment type="catalytic activity">
    <reaction evidence="1">
        <text>Endonucleolytic cleavage to 5'-phosphooligonucleotide end-products.</text>
        <dbReference type="EC" id="3.1.21.2"/>
    </reaction>
</comment>
<comment type="cofactor">
    <cofactor evidence="1">
        <name>Zn(2+)</name>
        <dbReference type="ChEBI" id="CHEBI:29105"/>
    </cofactor>
    <text evidence="1">Binds 3 Zn(2+) ions.</text>
</comment>
<comment type="similarity">
    <text evidence="1">Belongs to the AP endonuclease 2 family.</text>
</comment>
<keyword id="KW-0227">DNA damage</keyword>
<keyword id="KW-0234">DNA repair</keyword>
<keyword id="KW-0255">Endonuclease</keyword>
<keyword id="KW-0378">Hydrolase</keyword>
<keyword id="KW-0479">Metal-binding</keyword>
<keyword id="KW-0540">Nuclease</keyword>
<keyword id="KW-1185">Reference proteome</keyword>
<keyword id="KW-0862">Zinc</keyword>
<gene>
    <name evidence="1" type="primary">nfo</name>
    <name type="ordered locus">MSC_0105</name>
</gene>
<evidence type="ECO:0000255" key="1">
    <source>
        <dbReference type="HAMAP-Rule" id="MF_00152"/>
    </source>
</evidence>
<reference key="1">
    <citation type="journal article" date="2004" name="Genome Res.">
        <title>The genome sequence of Mycoplasma mycoides subsp. mycoides SC type strain PG1T, the causative agent of contagious bovine pleuropneumonia (CBPP).</title>
        <authorList>
            <person name="Westberg J."/>
            <person name="Persson A."/>
            <person name="Holmberg A."/>
            <person name="Goesmann A."/>
            <person name="Lundeberg J."/>
            <person name="Johansson K.-E."/>
            <person name="Pettersson B."/>
            <person name="Uhlen M."/>
        </authorList>
    </citation>
    <scope>NUCLEOTIDE SEQUENCE [LARGE SCALE GENOMIC DNA]</scope>
    <source>
        <strain>CCUG 32753 / NCTC 10114 / PG1</strain>
    </source>
</reference>
<proteinExistence type="inferred from homology"/>
<dbReference type="EC" id="3.1.21.2" evidence="1"/>
<dbReference type="EMBL" id="BX293980">
    <property type="protein sequence ID" value="CAE76757.1"/>
    <property type="molecule type" value="Genomic_DNA"/>
</dbReference>
<dbReference type="RefSeq" id="NP_975115.1">
    <property type="nucleotide sequence ID" value="NC_005364.2"/>
</dbReference>
<dbReference type="RefSeq" id="WP_011166314.1">
    <property type="nucleotide sequence ID" value="NC_005364.2"/>
</dbReference>
<dbReference type="SMR" id="Q6MUC7"/>
<dbReference type="STRING" id="272632.MSC_0105"/>
<dbReference type="KEGG" id="mmy:MSC_0105"/>
<dbReference type="PATRIC" id="fig|272632.4.peg.109"/>
<dbReference type="eggNOG" id="COG0648">
    <property type="taxonomic scope" value="Bacteria"/>
</dbReference>
<dbReference type="HOGENOM" id="CLU_025885_4_1_14"/>
<dbReference type="Proteomes" id="UP000001016">
    <property type="component" value="Chromosome"/>
</dbReference>
<dbReference type="GO" id="GO:0008833">
    <property type="term" value="F:deoxyribonuclease IV (phage-T4-induced) activity"/>
    <property type="evidence" value="ECO:0007669"/>
    <property type="project" value="UniProtKB-UniRule"/>
</dbReference>
<dbReference type="GO" id="GO:0003677">
    <property type="term" value="F:DNA binding"/>
    <property type="evidence" value="ECO:0007669"/>
    <property type="project" value="InterPro"/>
</dbReference>
<dbReference type="GO" id="GO:0003906">
    <property type="term" value="F:DNA-(apurinic or apyrimidinic site) endonuclease activity"/>
    <property type="evidence" value="ECO:0007669"/>
    <property type="project" value="TreeGrafter"/>
</dbReference>
<dbReference type="GO" id="GO:0008081">
    <property type="term" value="F:phosphoric diester hydrolase activity"/>
    <property type="evidence" value="ECO:0007669"/>
    <property type="project" value="TreeGrafter"/>
</dbReference>
<dbReference type="GO" id="GO:0008270">
    <property type="term" value="F:zinc ion binding"/>
    <property type="evidence" value="ECO:0007669"/>
    <property type="project" value="UniProtKB-UniRule"/>
</dbReference>
<dbReference type="GO" id="GO:0006284">
    <property type="term" value="P:base-excision repair"/>
    <property type="evidence" value="ECO:0007669"/>
    <property type="project" value="TreeGrafter"/>
</dbReference>
<dbReference type="CDD" id="cd00019">
    <property type="entry name" value="AP2Ec"/>
    <property type="match status" value="1"/>
</dbReference>
<dbReference type="FunFam" id="3.20.20.150:FF:000001">
    <property type="entry name" value="Probable endonuclease 4"/>
    <property type="match status" value="1"/>
</dbReference>
<dbReference type="Gene3D" id="3.20.20.150">
    <property type="entry name" value="Divalent-metal-dependent TIM barrel enzymes"/>
    <property type="match status" value="1"/>
</dbReference>
<dbReference type="HAMAP" id="MF_00152">
    <property type="entry name" value="Nfo"/>
    <property type="match status" value="1"/>
</dbReference>
<dbReference type="InterPro" id="IPR001719">
    <property type="entry name" value="AP_endonuc_2"/>
</dbReference>
<dbReference type="InterPro" id="IPR018246">
    <property type="entry name" value="AP_endonuc_F2_Zn_BS"/>
</dbReference>
<dbReference type="InterPro" id="IPR036237">
    <property type="entry name" value="Xyl_isomerase-like_sf"/>
</dbReference>
<dbReference type="InterPro" id="IPR013022">
    <property type="entry name" value="Xyl_isomerase-like_TIM-brl"/>
</dbReference>
<dbReference type="NCBIfam" id="TIGR00587">
    <property type="entry name" value="nfo"/>
    <property type="match status" value="1"/>
</dbReference>
<dbReference type="NCBIfam" id="NF002196">
    <property type="entry name" value="PRK01060.1-1"/>
    <property type="match status" value="1"/>
</dbReference>
<dbReference type="PANTHER" id="PTHR21445:SF0">
    <property type="entry name" value="APURINIC-APYRIMIDINIC ENDONUCLEASE"/>
    <property type="match status" value="1"/>
</dbReference>
<dbReference type="PANTHER" id="PTHR21445">
    <property type="entry name" value="ENDONUCLEASE IV ENDODEOXYRIBONUCLEASE IV"/>
    <property type="match status" value="1"/>
</dbReference>
<dbReference type="Pfam" id="PF01261">
    <property type="entry name" value="AP_endonuc_2"/>
    <property type="match status" value="1"/>
</dbReference>
<dbReference type="SMART" id="SM00518">
    <property type="entry name" value="AP2Ec"/>
    <property type="match status" value="1"/>
</dbReference>
<dbReference type="SUPFAM" id="SSF51658">
    <property type="entry name" value="Xylose isomerase-like"/>
    <property type="match status" value="1"/>
</dbReference>
<dbReference type="PROSITE" id="PS00729">
    <property type="entry name" value="AP_NUCLEASE_F2_1"/>
    <property type="match status" value="1"/>
</dbReference>
<dbReference type="PROSITE" id="PS00730">
    <property type="entry name" value="AP_NUCLEASE_F2_2"/>
    <property type="match status" value="1"/>
</dbReference>
<dbReference type="PROSITE" id="PS51432">
    <property type="entry name" value="AP_NUCLEASE_F2_4"/>
    <property type="match status" value="1"/>
</dbReference>
<accession>Q6MUC7</accession>
<protein>
    <recommendedName>
        <fullName evidence="1">Probable endonuclease 4</fullName>
        <ecNumber evidence="1">3.1.21.2</ecNumber>
    </recommendedName>
    <alternativeName>
        <fullName evidence="1">Endodeoxyribonuclease IV</fullName>
    </alternativeName>
    <alternativeName>
        <fullName evidence="1">Endonuclease IV</fullName>
    </alternativeName>
</protein>
<name>END4_MYCMS</name>
<organism>
    <name type="scientific">Mycoplasma mycoides subsp. mycoides SC (strain CCUG 32753 / NCTC 10114 / PG1)</name>
    <dbReference type="NCBI Taxonomy" id="272632"/>
    <lineage>
        <taxon>Bacteria</taxon>
        <taxon>Bacillati</taxon>
        <taxon>Mycoplasmatota</taxon>
        <taxon>Mollicutes</taxon>
        <taxon>Mycoplasmataceae</taxon>
        <taxon>Mycoplasma</taxon>
    </lineage>
</organism>
<sequence>MDKILLGCHVSMNKQNNYLVGSVNEAISYKANTFMIFTGPPQSTLRTNTNHLYINQMHELMNSYKIDAKDLVVHAPYIINIANSVDQNKWKFTVDFLIQEIKRCEEIKIPTLVLHPGSYTTGNYKDSLNQIIKALNIVSNYQVNVKIALETMSGKGTEVCSRLEDFKYILDNVKNKDKVGVCLDTCHLHDAGYDLSKWTEFKEQMKQNFSLDKVLCIHLNDSKNMISSHKDRHANIGYGYVGFDTLVNVVFDKDFSNISKILETPYIDKTPPYKIEIEDLLNKTFTNRL</sequence>